<feature type="chain" id="PRO_0000432251" description="4-hydroxyproline 2-epimerase">
    <location>
        <begin position="1"/>
        <end position="333"/>
    </location>
</feature>
<feature type="active site" description="Proton acceptor" evidence="1">
    <location>
        <position position="91"/>
    </location>
</feature>
<feature type="active site" description="Proton donor" evidence="1">
    <location>
        <position position="254"/>
    </location>
</feature>
<feature type="binding site" evidence="1">
    <location>
        <begin position="92"/>
        <end position="93"/>
    </location>
    <ligand>
        <name>substrate</name>
    </ligand>
</feature>
<feature type="binding site" evidence="1">
    <location>
        <position position="225"/>
    </location>
    <ligand>
        <name>substrate</name>
    </ligand>
</feature>
<feature type="binding site" evidence="1">
    <location>
        <position position="250"/>
    </location>
    <ligand>
        <name>substrate</name>
    </ligand>
</feature>
<feature type="binding site" evidence="1">
    <location>
        <begin position="255"/>
        <end position="256"/>
    </location>
    <ligand>
        <name>substrate</name>
    </ligand>
</feature>
<proteinExistence type="evidence at protein level"/>
<accession>D2AV87</accession>
<gene>
    <name evidence="5" type="ordered locus">Sros_6004</name>
</gene>
<keyword id="KW-0413">Isomerase</keyword>
<keyword id="KW-1185">Reference proteome</keyword>
<protein>
    <recommendedName>
        <fullName evidence="3">4-hydroxyproline 2-epimerase</fullName>
        <shortName>4Hyp 2-epimerase</shortName>
        <shortName evidence="3">4HypE</shortName>
        <ecNumber evidence="2">5.1.1.8</ecNumber>
    </recommendedName>
</protein>
<reference key="1">
    <citation type="journal article" date="2010" name="Stand. Genomic Sci.">
        <title>Complete genome sequence of Streptosporangium roseum type strain (NI 9100).</title>
        <authorList>
            <person name="Nolan M."/>
            <person name="Sikorski J."/>
            <person name="Jando M."/>
            <person name="Lucas S."/>
            <person name="Lapidus A."/>
            <person name="Glavina Del Rio T."/>
            <person name="Chen F."/>
            <person name="Tice H."/>
            <person name="Pitluck S."/>
            <person name="Cheng J.F."/>
            <person name="Chertkov O."/>
            <person name="Sims D."/>
            <person name="Meincke L."/>
            <person name="Brettin T."/>
            <person name="Han C."/>
            <person name="Detter J.C."/>
            <person name="Bruce D."/>
            <person name="Goodwin L."/>
            <person name="Land M."/>
            <person name="Hauser L."/>
            <person name="Chang Y.J."/>
            <person name="Jeffries C.D."/>
            <person name="Ivanova N."/>
            <person name="Mavromatis K."/>
            <person name="Mikhailova N."/>
            <person name="Chen A."/>
            <person name="Palaniappan K."/>
            <person name="Chain P."/>
            <person name="Rohde M."/>
            <person name="Goker M."/>
            <person name="Bristow J."/>
            <person name="Eisen J.A."/>
            <person name="Markowitz V."/>
            <person name="Hugenholtz P."/>
            <person name="Kyrpides N.C."/>
            <person name="Klenk H.P."/>
        </authorList>
    </citation>
    <scope>NUCLEOTIDE SEQUENCE [LARGE SCALE GENOMIC DNA]</scope>
    <source>
        <strain>ATCC 12428 / DSM 43021 / JCM 3005 / KCTC 9067 / NCIMB 10171 / NRRL 2505 / NI 9100</strain>
    </source>
</reference>
<reference key="2">
    <citation type="journal article" date="2014" name="Elife">
        <title>Prediction and characterization of enzymatic activities guided by sequence similarity and genome neighborhood networks.</title>
        <authorList>
            <person name="Zhao S."/>
            <person name="Sakai A."/>
            <person name="Zhang X."/>
            <person name="Vetting M.W."/>
            <person name="Kumar R."/>
            <person name="Hillerich B."/>
            <person name="San Francisco B."/>
            <person name="Solbiati J."/>
            <person name="Steves A."/>
            <person name="Brown S."/>
            <person name="Akiva E."/>
            <person name="Barber A."/>
            <person name="Seidel R.D."/>
            <person name="Babbitt P.C."/>
            <person name="Almo S.C."/>
            <person name="Gerlt J.A."/>
            <person name="Jacobson M.P."/>
        </authorList>
    </citation>
    <scope>FUNCTION</scope>
    <scope>CATALYTIC ACTIVITY</scope>
    <scope>BIOPHYSICOCHEMICAL PROPERTIES</scope>
</reference>
<organism>
    <name type="scientific">Streptosporangium roseum (strain ATCC 12428 / DSM 43021 / JCM 3005 / KCTC 9067 / NCIMB 10171 / NRRL 2505 / NI 9100)</name>
    <dbReference type="NCBI Taxonomy" id="479432"/>
    <lineage>
        <taxon>Bacteria</taxon>
        <taxon>Bacillati</taxon>
        <taxon>Actinomycetota</taxon>
        <taxon>Actinomycetes</taxon>
        <taxon>Streptosporangiales</taxon>
        <taxon>Streptosporangiaceae</taxon>
        <taxon>Streptosporangium</taxon>
    </lineage>
</organism>
<name>4HYPE_STRRD</name>
<evidence type="ECO:0000250" key="1">
    <source>
        <dbReference type="UniProtKB" id="Q4KGU2"/>
    </source>
</evidence>
<evidence type="ECO:0000269" key="2">
    <source>
    </source>
</evidence>
<evidence type="ECO:0000303" key="3">
    <source>
    </source>
</evidence>
<evidence type="ECO:0000305" key="4"/>
<evidence type="ECO:0000312" key="5">
    <source>
        <dbReference type="EMBL" id="ACZ88738.1"/>
    </source>
</evidence>
<dbReference type="EC" id="5.1.1.8" evidence="2"/>
<dbReference type="EMBL" id="CP001814">
    <property type="protein sequence ID" value="ACZ88738.1"/>
    <property type="molecule type" value="Genomic_DNA"/>
</dbReference>
<dbReference type="RefSeq" id="WP_012892473.1">
    <property type="nucleotide sequence ID" value="NC_013595.1"/>
</dbReference>
<dbReference type="SMR" id="D2AV87"/>
<dbReference type="STRING" id="479432.Sros_6004"/>
<dbReference type="KEGG" id="sro:Sros_6004"/>
<dbReference type="eggNOG" id="COG3938">
    <property type="taxonomic scope" value="Bacteria"/>
</dbReference>
<dbReference type="HOGENOM" id="CLU_036729_0_0_11"/>
<dbReference type="OrthoDB" id="181267at2"/>
<dbReference type="SABIO-RK" id="D2AV87"/>
<dbReference type="Proteomes" id="UP000002029">
    <property type="component" value="Chromosome"/>
</dbReference>
<dbReference type="GO" id="GO:0047580">
    <property type="term" value="F:4-hydroxyproline epimerase activity"/>
    <property type="evidence" value="ECO:0000314"/>
    <property type="project" value="CACAO"/>
</dbReference>
<dbReference type="FunFam" id="3.10.310.10:FF:000005">
    <property type="entry name" value="Proline racemase"/>
    <property type="match status" value="1"/>
</dbReference>
<dbReference type="Gene3D" id="3.10.310.10">
    <property type="entry name" value="Diaminopimelate Epimerase, Chain A, domain 1"/>
    <property type="match status" value="2"/>
</dbReference>
<dbReference type="InterPro" id="IPR008794">
    <property type="entry name" value="Pro_racemase_fam"/>
</dbReference>
<dbReference type="PANTHER" id="PTHR33442:SF5">
    <property type="entry name" value="BIFUNCTIONAL TRANS-3-HYDROXY-L-PROLINE DEHYDRATASE_2-EPIMERASE"/>
    <property type="match status" value="1"/>
</dbReference>
<dbReference type="PANTHER" id="PTHR33442">
    <property type="entry name" value="TRANS-3-HYDROXY-L-PROLINE DEHYDRATASE"/>
    <property type="match status" value="1"/>
</dbReference>
<dbReference type="Pfam" id="PF05544">
    <property type="entry name" value="Pro_racemase"/>
    <property type="match status" value="1"/>
</dbReference>
<dbReference type="PIRSF" id="PIRSF029792">
    <property type="entry name" value="Pro_racemase"/>
    <property type="match status" value="1"/>
</dbReference>
<dbReference type="SFLD" id="SFLDS00028">
    <property type="entry name" value="Proline_Racemase"/>
    <property type="match status" value="1"/>
</dbReference>
<dbReference type="SUPFAM" id="SSF54506">
    <property type="entry name" value="Diaminopimelate epimerase-like"/>
    <property type="match status" value="1"/>
</dbReference>
<comment type="function">
    <text evidence="2 4">Catalyzes the epimerization of trans-4-hydroxy-L-proline (t4LHyp) to cis-4-hydroxy-D-proline (c4DHyp). Is likely involved in a degradation pathway that converts t4LHyp to alpha-ketoglutarate. Displays no proline racemase activity.</text>
</comment>
<comment type="catalytic activity">
    <reaction evidence="2">
        <text>trans-4-hydroxy-L-proline = cis-4-hydroxy-D-proline</text>
        <dbReference type="Rhea" id="RHEA:21152"/>
        <dbReference type="ChEBI" id="CHEBI:57690"/>
        <dbReference type="ChEBI" id="CHEBI:58375"/>
        <dbReference type="EC" id="5.1.1.8"/>
    </reaction>
</comment>
<comment type="biophysicochemical properties">
    <kinetics>
        <KM evidence="2">7.8 mM for trans-4-hydroxy-L-proline</KM>
        <text evidence="2">kcat is 14 sec(-1) for t4LHyp epimerization.</text>
    </kinetics>
</comment>
<comment type="similarity">
    <text evidence="4">Belongs to the proline racemase family.</text>
</comment>
<sequence>MRTKRVFHAVDSHTEGMPTRVITGGVGVIPGSTMAERREHFLAEMDHVRTLLMYEPRGHSAMSGAILQPPTRPDADYGVLYIEVSGCLPMCGHGTIGVATVLVETGMVEVVEPVTTIRLDTPAGLVVAEVRVEDGAATAVTITNVPSFSAGLDRTVKVPGIGEVTYDLAYGGNFYAILPIESVGLPFDRAHKQQILDAGLAIMDAINEQDEPVHPLDAGIRGCHHVQFTAPGSDARHSRHAMAIHPGWFDRSPCGTGTSARMAQLHARGELPLDTDFVNESFIGTRFVGRLVEETEVTDLPAVVPTITGRAWVTGTAQYFLDPRDPFPEGFLL</sequence>